<accession>Q12VH4</accession>
<protein>
    <recommendedName>
        <fullName evidence="1">Geranylgeranylglyceryl phosphate synthase</fullName>
        <shortName evidence="1">GGGP synthase</shortName>
        <shortName evidence="1">GGGPS</shortName>
        <ecNumber evidence="1">2.5.1.41</ecNumber>
    </recommendedName>
    <alternativeName>
        <fullName evidence="1">(S)-3-O-geranylgeranylglyceryl phosphate synthase</fullName>
    </alternativeName>
    <alternativeName>
        <fullName evidence="1">Phosphoglycerol geranylgeranyltransferase</fullName>
    </alternativeName>
</protein>
<feature type="chain" id="PRO_0000304184" description="Geranylgeranylglyceryl phosphate synthase">
    <location>
        <begin position="1"/>
        <end position="247"/>
    </location>
</feature>
<feature type="binding site" evidence="1">
    <location>
        <position position="23"/>
    </location>
    <ligand>
        <name>Mg(2+)</name>
        <dbReference type="ChEBI" id="CHEBI:18420"/>
    </ligand>
</feature>
<feature type="binding site" evidence="1">
    <location>
        <position position="52"/>
    </location>
    <ligand>
        <name>Mg(2+)</name>
        <dbReference type="ChEBI" id="CHEBI:18420"/>
    </ligand>
</feature>
<feature type="binding site" evidence="1">
    <location>
        <begin position="171"/>
        <end position="177"/>
    </location>
    <ligand>
        <name>sn-glycerol 1-phosphate</name>
        <dbReference type="ChEBI" id="CHEBI:57685"/>
    </ligand>
</feature>
<feature type="binding site" evidence="1">
    <location>
        <begin position="203"/>
        <end position="204"/>
    </location>
    <ligand>
        <name>sn-glycerol 1-phosphate</name>
        <dbReference type="ChEBI" id="CHEBI:57685"/>
    </ligand>
</feature>
<feature type="binding site" evidence="1">
    <location>
        <begin position="225"/>
        <end position="226"/>
    </location>
    <ligand>
        <name>sn-glycerol 1-phosphate</name>
        <dbReference type="ChEBI" id="CHEBI:57685"/>
    </ligand>
</feature>
<name>GGGPS_METBU</name>
<reference key="1">
    <citation type="journal article" date="2009" name="ISME J.">
        <title>The genome sequence of the psychrophilic archaeon, Methanococcoides burtonii: the role of genome evolution in cold adaptation.</title>
        <authorList>
            <person name="Allen M.A."/>
            <person name="Lauro F.M."/>
            <person name="Williams T.J."/>
            <person name="Burg D."/>
            <person name="Siddiqui K.S."/>
            <person name="De Francisci D."/>
            <person name="Chong K.W."/>
            <person name="Pilak O."/>
            <person name="Chew H.H."/>
            <person name="De Maere M.Z."/>
            <person name="Ting L."/>
            <person name="Katrib M."/>
            <person name="Ng C."/>
            <person name="Sowers K.R."/>
            <person name="Galperin M.Y."/>
            <person name="Anderson I.J."/>
            <person name="Ivanova N."/>
            <person name="Dalin E."/>
            <person name="Martinez M."/>
            <person name="Lapidus A."/>
            <person name="Hauser L."/>
            <person name="Land M."/>
            <person name="Thomas T."/>
            <person name="Cavicchioli R."/>
        </authorList>
    </citation>
    <scope>NUCLEOTIDE SEQUENCE [LARGE SCALE GENOMIC DNA]</scope>
    <source>
        <strain>DSM 6242 / NBRC 107633 / OCM 468 / ACE-M</strain>
    </source>
</reference>
<keyword id="KW-0963">Cytoplasm</keyword>
<keyword id="KW-0444">Lipid biosynthesis</keyword>
<keyword id="KW-0443">Lipid metabolism</keyword>
<keyword id="KW-0460">Magnesium</keyword>
<keyword id="KW-0479">Metal-binding</keyword>
<keyword id="KW-0594">Phospholipid biosynthesis</keyword>
<keyword id="KW-1208">Phospholipid metabolism</keyword>
<keyword id="KW-0808">Transferase</keyword>
<gene>
    <name type="ordered locus">Mbur_1652</name>
</gene>
<dbReference type="EC" id="2.5.1.41" evidence="1"/>
<dbReference type="EMBL" id="CP000300">
    <property type="protein sequence ID" value="ABE52552.1"/>
    <property type="molecule type" value="Genomic_DNA"/>
</dbReference>
<dbReference type="RefSeq" id="WP_011499695.1">
    <property type="nucleotide sequence ID" value="NC_007955.1"/>
</dbReference>
<dbReference type="SMR" id="Q12VH4"/>
<dbReference type="STRING" id="259564.Mbur_1652"/>
<dbReference type="GeneID" id="3997285"/>
<dbReference type="KEGG" id="mbu:Mbur_1652"/>
<dbReference type="HOGENOM" id="CLU_068610_0_0_2"/>
<dbReference type="OrthoDB" id="7409at2157"/>
<dbReference type="UniPathway" id="UPA00940"/>
<dbReference type="Proteomes" id="UP000001979">
    <property type="component" value="Chromosome"/>
</dbReference>
<dbReference type="GO" id="GO:0005737">
    <property type="term" value="C:cytoplasm"/>
    <property type="evidence" value="ECO:0007669"/>
    <property type="project" value="UniProtKB-SubCell"/>
</dbReference>
<dbReference type="GO" id="GO:0000287">
    <property type="term" value="F:magnesium ion binding"/>
    <property type="evidence" value="ECO:0007669"/>
    <property type="project" value="UniProtKB-UniRule"/>
</dbReference>
<dbReference type="GO" id="GO:0047294">
    <property type="term" value="F:phosphoglycerol geranylgeranyltransferase activity"/>
    <property type="evidence" value="ECO:0007669"/>
    <property type="project" value="UniProtKB-UniRule"/>
</dbReference>
<dbReference type="GO" id="GO:0046474">
    <property type="term" value="P:glycerophospholipid biosynthetic process"/>
    <property type="evidence" value="ECO:0007669"/>
    <property type="project" value="UniProtKB-UniRule"/>
</dbReference>
<dbReference type="CDD" id="cd02812">
    <property type="entry name" value="PcrB_like"/>
    <property type="match status" value="1"/>
</dbReference>
<dbReference type="FunFam" id="3.20.20.390:FF:000001">
    <property type="entry name" value="Heptaprenylglyceryl phosphate synthase"/>
    <property type="match status" value="1"/>
</dbReference>
<dbReference type="Gene3D" id="3.20.20.390">
    <property type="entry name" value="FMN-linked oxidoreductases"/>
    <property type="match status" value="1"/>
</dbReference>
<dbReference type="HAMAP" id="MF_00112">
    <property type="entry name" value="GGGP_HepGP_synthase"/>
    <property type="match status" value="1"/>
</dbReference>
<dbReference type="InterPro" id="IPR039074">
    <property type="entry name" value="GGGP/HepGP_synthase_I"/>
</dbReference>
<dbReference type="InterPro" id="IPR038597">
    <property type="entry name" value="GGGP/HepGP_synthase_sf"/>
</dbReference>
<dbReference type="InterPro" id="IPR008205">
    <property type="entry name" value="GGGP_HepGP_synthase"/>
</dbReference>
<dbReference type="InterPro" id="IPR010946">
    <property type="entry name" value="GGGP_synth"/>
</dbReference>
<dbReference type="NCBIfam" id="TIGR01769">
    <property type="entry name" value="GGGP"/>
    <property type="match status" value="1"/>
</dbReference>
<dbReference type="NCBIfam" id="TIGR01768">
    <property type="entry name" value="GGGP-family"/>
    <property type="match status" value="1"/>
</dbReference>
<dbReference type="NCBIfam" id="NF003198">
    <property type="entry name" value="PRK04169.1-2"/>
    <property type="match status" value="1"/>
</dbReference>
<dbReference type="PANTHER" id="PTHR40029">
    <property type="match status" value="1"/>
</dbReference>
<dbReference type="PANTHER" id="PTHR40029:SF2">
    <property type="entry name" value="HEPTAPRENYLGLYCERYL PHOSPHATE SYNTHASE"/>
    <property type="match status" value="1"/>
</dbReference>
<dbReference type="Pfam" id="PF01884">
    <property type="entry name" value="PcrB"/>
    <property type="match status" value="1"/>
</dbReference>
<dbReference type="SUPFAM" id="SSF51395">
    <property type="entry name" value="FMN-linked oxidoreductases"/>
    <property type="match status" value="1"/>
</dbReference>
<sequence>MQVEEYLNDIAEREGTVHLTLIDPASQSPEAAAEIAKAAVAGGTDAILIGGSTGAVGVALDQTLIKIKEQVDVPTILFPGNAGGVSTHADAIFFMSLLNSRDINYIITNQVMGAPVVYKSGIEPISMAYIISEPGGTVGWVGDAKLIPRNKPEIAAAYSLAGKYMGMHYTYLEAGSGADRPITPETIGAVKHVLGDNKLIVGGGIRDGKTAKICADAGADMIVTGTIVEETDDVRKKIEEIVSAIKK</sequence>
<organism>
    <name type="scientific">Methanococcoides burtonii (strain DSM 6242 / NBRC 107633 / OCM 468 / ACE-M)</name>
    <dbReference type="NCBI Taxonomy" id="259564"/>
    <lineage>
        <taxon>Archaea</taxon>
        <taxon>Methanobacteriati</taxon>
        <taxon>Methanobacteriota</taxon>
        <taxon>Stenosarchaea group</taxon>
        <taxon>Methanomicrobia</taxon>
        <taxon>Methanosarcinales</taxon>
        <taxon>Methanosarcinaceae</taxon>
        <taxon>Methanococcoides</taxon>
    </lineage>
</organism>
<comment type="function">
    <text evidence="1">Prenyltransferase that catalyzes the transfer of the geranylgeranyl moiety of geranylgeranyl diphosphate (GGPP) to the C3 hydroxyl of sn-glycerol-1-phosphate (G1P). This reaction is the first ether-bond-formation step in the biosynthesis of archaeal membrane lipids.</text>
</comment>
<comment type="catalytic activity">
    <reaction evidence="1">
        <text>sn-glycerol 1-phosphate + (2E,6E,10E)-geranylgeranyl diphosphate = sn-3-O-(geranylgeranyl)glycerol 1-phosphate + diphosphate</text>
        <dbReference type="Rhea" id="RHEA:23404"/>
        <dbReference type="ChEBI" id="CHEBI:33019"/>
        <dbReference type="ChEBI" id="CHEBI:57677"/>
        <dbReference type="ChEBI" id="CHEBI:57685"/>
        <dbReference type="ChEBI" id="CHEBI:58756"/>
        <dbReference type="EC" id="2.5.1.41"/>
    </reaction>
</comment>
<comment type="cofactor">
    <cofactor evidence="1">
        <name>Mg(2+)</name>
        <dbReference type="ChEBI" id="CHEBI:18420"/>
    </cofactor>
</comment>
<comment type="pathway">
    <text evidence="1">Membrane lipid metabolism; glycerophospholipid metabolism.</text>
</comment>
<comment type="subcellular location">
    <subcellularLocation>
        <location evidence="1">Cytoplasm</location>
    </subcellularLocation>
</comment>
<comment type="similarity">
    <text evidence="1">Belongs to the GGGP/HepGP synthase family. Group II subfamily.</text>
</comment>
<proteinExistence type="inferred from homology"/>
<evidence type="ECO:0000255" key="1">
    <source>
        <dbReference type="HAMAP-Rule" id="MF_00112"/>
    </source>
</evidence>